<feature type="chain" id="PRO_0000151901" description="ATP phosphoribosyltransferase">
    <location>
        <begin position="1"/>
        <end position="223"/>
    </location>
</feature>
<dbReference type="EC" id="2.4.2.17" evidence="1"/>
<dbReference type="EMBL" id="BX640422">
    <property type="protein sequence ID" value="CAE44023.1"/>
    <property type="molecule type" value="Genomic_DNA"/>
</dbReference>
<dbReference type="RefSeq" id="NP_882268.1">
    <property type="nucleotide sequence ID" value="NC_002929.2"/>
</dbReference>
<dbReference type="RefSeq" id="WP_010931640.1">
    <property type="nucleotide sequence ID" value="NZ_CP039022.1"/>
</dbReference>
<dbReference type="SMR" id="Q7VSZ2"/>
<dbReference type="STRING" id="257313.BP3767"/>
<dbReference type="PaxDb" id="257313-BP3767"/>
<dbReference type="GeneID" id="69600006"/>
<dbReference type="KEGG" id="bpe:BP3767"/>
<dbReference type="PATRIC" id="fig|257313.5.peg.4071"/>
<dbReference type="eggNOG" id="COG0040">
    <property type="taxonomic scope" value="Bacteria"/>
</dbReference>
<dbReference type="HOGENOM" id="CLU_038115_2_0_4"/>
<dbReference type="UniPathway" id="UPA00031">
    <property type="reaction ID" value="UER00006"/>
</dbReference>
<dbReference type="Proteomes" id="UP000002676">
    <property type="component" value="Chromosome"/>
</dbReference>
<dbReference type="GO" id="GO:0005737">
    <property type="term" value="C:cytoplasm"/>
    <property type="evidence" value="ECO:0007669"/>
    <property type="project" value="UniProtKB-SubCell"/>
</dbReference>
<dbReference type="GO" id="GO:0005524">
    <property type="term" value="F:ATP binding"/>
    <property type="evidence" value="ECO:0007669"/>
    <property type="project" value="UniProtKB-KW"/>
</dbReference>
<dbReference type="GO" id="GO:0003879">
    <property type="term" value="F:ATP phosphoribosyltransferase activity"/>
    <property type="evidence" value="ECO:0007669"/>
    <property type="project" value="UniProtKB-UniRule"/>
</dbReference>
<dbReference type="GO" id="GO:0000105">
    <property type="term" value="P:L-histidine biosynthetic process"/>
    <property type="evidence" value="ECO:0007669"/>
    <property type="project" value="UniProtKB-UniRule"/>
</dbReference>
<dbReference type="CDD" id="cd13595">
    <property type="entry name" value="PBP2_HisGs"/>
    <property type="match status" value="1"/>
</dbReference>
<dbReference type="FunFam" id="3.40.190.10:FF:000011">
    <property type="entry name" value="ATP phosphoribosyltransferase"/>
    <property type="match status" value="1"/>
</dbReference>
<dbReference type="Gene3D" id="3.40.190.10">
    <property type="entry name" value="Periplasmic binding protein-like II"/>
    <property type="match status" value="2"/>
</dbReference>
<dbReference type="HAMAP" id="MF_01018">
    <property type="entry name" value="HisG_Short"/>
    <property type="match status" value="1"/>
</dbReference>
<dbReference type="InterPro" id="IPR013820">
    <property type="entry name" value="ATP_PRibTrfase_cat"/>
</dbReference>
<dbReference type="InterPro" id="IPR018198">
    <property type="entry name" value="ATP_PRibTrfase_CS"/>
</dbReference>
<dbReference type="InterPro" id="IPR001348">
    <property type="entry name" value="ATP_PRibTrfase_HisG"/>
</dbReference>
<dbReference type="InterPro" id="IPR024893">
    <property type="entry name" value="ATP_PRibTrfase_HisG_short"/>
</dbReference>
<dbReference type="NCBIfam" id="TIGR00070">
    <property type="entry name" value="hisG"/>
    <property type="match status" value="1"/>
</dbReference>
<dbReference type="PANTHER" id="PTHR21403:SF8">
    <property type="entry name" value="ATP PHOSPHORIBOSYLTRANSFERASE"/>
    <property type="match status" value="1"/>
</dbReference>
<dbReference type="PANTHER" id="PTHR21403">
    <property type="entry name" value="ATP PHOSPHORIBOSYLTRANSFERASE ATP-PRTASE"/>
    <property type="match status" value="1"/>
</dbReference>
<dbReference type="Pfam" id="PF01634">
    <property type="entry name" value="HisG"/>
    <property type="match status" value="1"/>
</dbReference>
<dbReference type="SUPFAM" id="SSF53850">
    <property type="entry name" value="Periplasmic binding protein-like II"/>
    <property type="match status" value="1"/>
</dbReference>
<dbReference type="PROSITE" id="PS01316">
    <property type="entry name" value="ATP_P_PHORIBOSYLTR"/>
    <property type="match status" value="1"/>
</dbReference>
<gene>
    <name evidence="1" type="primary">hisG</name>
    <name type="ordered locus">BP3767</name>
</gene>
<sequence length="223" mass="23957">MNPAAAPLTLALSKGRIFEETMPLLAEAGIEVPENPESSRKLILPTSDPGLRLIIVRASDVPTYVQYGAADLGIAGKDVLIEHAAQQSGRLYQPIDLNIAKCRLCVAVRQDFDYQAAVHQGARLRVATKYVQSAREHFAAKGVHVDIIKLYGSMELAPLVGLADAIVDLVSTGGTLRANGLAAVEDVMPISSRLIVNQAALKTRGARLQPLIDAFRRASERIA</sequence>
<comment type="function">
    <text evidence="1">Catalyzes the condensation of ATP and 5-phosphoribose 1-diphosphate to form N'-(5'-phosphoribosyl)-ATP (PR-ATP). Has a crucial role in the pathway because the rate of histidine biosynthesis seems to be controlled primarily by regulation of HisG enzymatic activity.</text>
</comment>
<comment type="catalytic activity">
    <reaction evidence="1">
        <text>1-(5-phospho-beta-D-ribosyl)-ATP + diphosphate = 5-phospho-alpha-D-ribose 1-diphosphate + ATP</text>
        <dbReference type="Rhea" id="RHEA:18473"/>
        <dbReference type="ChEBI" id="CHEBI:30616"/>
        <dbReference type="ChEBI" id="CHEBI:33019"/>
        <dbReference type="ChEBI" id="CHEBI:58017"/>
        <dbReference type="ChEBI" id="CHEBI:73183"/>
        <dbReference type="EC" id="2.4.2.17"/>
    </reaction>
</comment>
<comment type="pathway">
    <text evidence="1">Amino-acid biosynthesis; L-histidine biosynthesis; L-histidine from 5-phospho-alpha-D-ribose 1-diphosphate: step 1/9.</text>
</comment>
<comment type="subunit">
    <text evidence="1">Heteromultimer composed of HisG and HisZ subunits.</text>
</comment>
<comment type="subcellular location">
    <subcellularLocation>
        <location evidence="1">Cytoplasm</location>
    </subcellularLocation>
</comment>
<comment type="domain">
    <text>Lacks the C-terminal regulatory region which is replaced by HisZ.</text>
</comment>
<comment type="similarity">
    <text evidence="1">Belongs to the ATP phosphoribosyltransferase family. Short subfamily.</text>
</comment>
<keyword id="KW-0028">Amino-acid biosynthesis</keyword>
<keyword id="KW-0067">ATP-binding</keyword>
<keyword id="KW-0963">Cytoplasm</keyword>
<keyword id="KW-0328">Glycosyltransferase</keyword>
<keyword id="KW-0368">Histidine biosynthesis</keyword>
<keyword id="KW-0547">Nucleotide-binding</keyword>
<keyword id="KW-1185">Reference proteome</keyword>
<keyword id="KW-0808">Transferase</keyword>
<protein>
    <recommendedName>
        <fullName evidence="1">ATP phosphoribosyltransferase</fullName>
        <shortName evidence="1">ATP-PRT</shortName>
        <shortName evidence="1">ATP-PRTase</shortName>
        <ecNumber evidence="1">2.4.2.17</ecNumber>
    </recommendedName>
</protein>
<name>HIS1_BORPE</name>
<proteinExistence type="inferred from homology"/>
<accession>Q7VSZ2</accession>
<reference key="1">
    <citation type="journal article" date="2003" name="Nat. Genet.">
        <title>Comparative analysis of the genome sequences of Bordetella pertussis, Bordetella parapertussis and Bordetella bronchiseptica.</title>
        <authorList>
            <person name="Parkhill J."/>
            <person name="Sebaihia M."/>
            <person name="Preston A."/>
            <person name="Murphy L.D."/>
            <person name="Thomson N.R."/>
            <person name="Harris D.E."/>
            <person name="Holden M.T.G."/>
            <person name="Churcher C.M."/>
            <person name="Bentley S.D."/>
            <person name="Mungall K.L."/>
            <person name="Cerdeno-Tarraga A.-M."/>
            <person name="Temple L."/>
            <person name="James K.D."/>
            <person name="Harris B."/>
            <person name="Quail M.A."/>
            <person name="Achtman M."/>
            <person name="Atkin R."/>
            <person name="Baker S."/>
            <person name="Basham D."/>
            <person name="Bason N."/>
            <person name="Cherevach I."/>
            <person name="Chillingworth T."/>
            <person name="Collins M."/>
            <person name="Cronin A."/>
            <person name="Davis P."/>
            <person name="Doggett J."/>
            <person name="Feltwell T."/>
            <person name="Goble A."/>
            <person name="Hamlin N."/>
            <person name="Hauser H."/>
            <person name="Holroyd S."/>
            <person name="Jagels K."/>
            <person name="Leather S."/>
            <person name="Moule S."/>
            <person name="Norberczak H."/>
            <person name="O'Neil S."/>
            <person name="Ormond D."/>
            <person name="Price C."/>
            <person name="Rabbinowitsch E."/>
            <person name="Rutter S."/>
            <person name="Sanders M."/>
            <person name="Saunders D."/>
            <person name="Seeger K."/>
            <person name="Sharp S."/>
            <person name="Simmonds M."/>
            <person name="Skelton J."/>
            <person name="Squares R."/>
            <person name="Squares S."/>
            <person name="Stevens K."/>
            <person name="Unwin L."/>
            <person name="Whitehead S."/>
            <person name="Barrell B.G."/>
            <person name="Maskell D.J."/>
        </authorList>
    </citation>
    <scope>NUCLEOTIDE SEQUENCE [LARGE SCALE GENOMIC DNA]</scope>
    <source>
        <strain>Tohama I / ATCC BAA-589 / NCTC 13251</strain>
    </source>
</reference>
<organism>
    <name type="scientific">Bordetella pertussis (strain Tohama I / ATCC BAA-589 / NCTC 13251)</name>
    <dbReference type="NCBI Taxonomy" id="257313"/>
    <lineage>
        <taxon>Bacteria</taxon>
        <taxon>Pseudomonadati</taxon>
        <taxon>Pseudomonadota</taxon>
        <taxon>Betaproteobacteria</taxon>
        <taxon>Burkholderiales</taxon>
        <taxon>Alcaligenaceae</taxon>
        <taxon>Bordetella</taxon>
    </lineage>
</organism>
<evidence type="ECO:0000255" key="1">
    <source>
        <dbReference type="HAMAP-Rule" id="MF_01018"/>
    </source>
</evidence>